<comment type="function">
    <text evidence="4">Reductase involved in lignan biosynthesis. Catalyzes the enantioselective sequential conversion of (+)-pinoresinol into (+)-lariciresinol and of (+)-lariciresinol into (-)-secoisolariciresinol. Abstracts the 4R-hydride from the NADPH cofactor during catalysis.</text>
</comment>
<comment type="catalytic activity">
    <reaction evidence="4">
        <text>(+)-lariciresinol + NADP(+) = (+)-pinoresinol + NADPH + H(+)</text>
        <dbReference type="Rhea" id="RHEA:34419"/>
        <dbReference type="ChEBI" id="CHEBI:40"/>
        <dbReference type="ChEBI" id="CHEBI:15378"/>
        <dbReference type="ChEBI" id="CHEBI:57783"/>
        <dbReference type="ChEBI" id="CHEBI:58349"/>
        <dbReference type="ChEBI" id="CHEBI:67246"/>
        <dbReference type="EC" id="1.23.1.1"/>
    </reaction>
</comment>
<comment type="catalytic activity">
    <reaction evidence="4">
        <text>(-)-secoisolariciresinol + NADP(+) = (+)-lariciresinol + NADPH + H(+)</text>
        <dbReference type="Rhea" id="RHEA:34423"/>
        <dbReference type="ChEBI" id="CHEBI:15378"/>
        <dbReference type="ChEBI" id="CHEBI:57783"/>
        <dbReference type="ChEBI" id="CHEBI:58349"/>
        <dbReference type="ChEBI" id="CHEBI:65004"/>
        <dbReference type="ChEBI" id="CHEBI:67246"/>
        <dbReference type="EC" id="1.23.1.2"/>
    </reaction>
</comment>
<comment type="biophysicochemical properties">
    <kinetics>
        <KM evidence="4">27 uM for (+)-pinoresinol</KM>
        <KM evidence="4">121 uM for (+)-lariciresinol</KM>
        <Vmax evidence="4">16.2 umol/h/mg enzyme toward (+)-pinoresinol</Vmax>
        <Vmax evidence="4">25.2 umol/h/mg enzyme toward (+)-lariciresinol</Vmax>
    </kinetics>
    <phDependence>
        <text evidence="4">Optimum pH is 7.4.</text>
    </phDependence>
    <temperatureDependence>
        <text evidence="4">Optimum temperature is 30 degrees Celsius.</text>
    </temperatureDependence>
</comment>
<comment type="subunit">
    <text evidence="1">Dimer.</text>
</comment>
<comment type="tissue specificity">
    <text evidence="3">Expressed in young stems, young roots and petioles. In stems, expressed in radial parenchyma cells and in the cambial cells of developing secondary xylem.</text>
</comment>
<comment type="similarity">
    <text evidence="5">Belongs to the NmrA-type oxidoreductase family. Isoflavone reductase subfamily.</text>
</comment>
<organism>
    <name type="scientific">Forsythia intermedia</name>
    <name type="common">Border forsythia</name>
    <name type="synonym">Forsythia suspensa x Forsythia viridissima</name>
    <dbReference type="NCBI Taxonomy" id="55183"/>
    <lineage>
        <taxon>Eukaryota</taxon>
        <taxon>Viridiplantae</taxon>
        <taxon>Streptophyta</taxon>
        <taxon>Embryophyta</taxon>
        <taxon>Tracheophyta</taxon>
        <taxon>Spermatophyta</taxon>
        <taxon>Magnoliopsida</taxon>
        <taxon>eudicotyledons</taxon>
        <taxon>Gunneridae</taxon>
        <taxon>Pentapetalae</taxon>
        <taxon>asterids</taxon>
        <taxon>lamiids</taxon>
        <taxon>Lamiales</taxon>
        <taxon>Oleaceae</taxon>
        <taxon>Forsythieae</taxon>
        <taxon>Forsythia</taxon>
    </lineage>
</organism>
<sequence>MGKSKVLIIGGTGYLGRRLVKASLAQGHETYILHRPEIGVDIDKVEMLISFKMQGAHLVSGSFKDFNSLVEAVKLVDVVISAISGVHIRSHQILLQLKLVEAIKEAGNVKRFLPSEFGMDPAKFMDTAMEPGKVTLDEKMVVRKAIEKAGIPFTYVSANCFAGYFLGGLCQFGKILPSRDFVIIHGDGNKKAIYNNEDDIATYAIKTINDPRTLNKTIYISPPKNILSQREVVQTWEKLIGKELQKITLSKEDFLASVKELEYAQQVGLSHYHDVNYQGCLTSFEIGDEEEASKLYPEVKYTSVEEYLKRYV</sequence>
<accession>P93143</accession>
<dbReference type="EC" id="1.23.1.2"/>
<dbReference type="EC" id="1.23.1.1"/>
<dbReference type="EMBL" id="U81158">
    <property type="protein sequence ID" value="AAC49608.1"/>
    <property type="molecule type" value="mRNA"/>
</dbReference>
<dbReference type="SMR" id="P93143"/>
<dbReference type="KEGG" id="ag:AAC49608"/>
<dbReference type="BRENDA" id="1.23.1.1">
    <property type="organism ID" value="13002"/>
</dbReference>
<dbReference type="GO" id="GO:0010284">
    <property type="term" value="F:lariciresinol reductase activity"/>
    <property type="evidence" value="ECO:0000314"/>
    <property type="project" value="UniProtKB"/>
</dbReference>
<dbReference type="GO" id="GO:0010283">
    <property type="term" value="F:pinoresinol reductase activity"/>
    <property type="evidence" value="ECO:0000314"/>
    <property type="project" value="UniProtKB"/>
</dbReference>
<dbReference type="GO" id="GO:1902132">
    <property type="term" value="P:(+)-lariciresinol biosynthetic process"/>
    <property type="evidence" value="ECO:0000314"/>
    <property type="project" value="UniProtKB"/>
</dbReference>
<dbReference type="GO" id="GO:1902131">
    <property type="term" value="P:(+)-lariciresinol catabolic process"/>
    <property type="evidence" value="ECO:0000314"/>
    <property type="project" value="UniProtKB"/>
</dbReference>
<dbReference type="GO" id="GO:1902125">
    <property type="term" value="P:(+)-pinoresinol catabolic process"/>
    <property type="evidence" value="ECO:0000314"/>
    <property type="project" value="UniProtKB"/>
</dbReference>
<dbReference type="GO" id="GO:1902138">
    <property type="term" value="P:(-)-secoisolariciresinol biosynthetic process"/>
    <property type="evidence" value="ECO:0000314"/>
    <property type="project" value="UniProtKB"/>
</dbReference>
<dbReference type="GO" id="GO:0009807">
    <property type="term" value="P:lignan biosynthetic process"/>
    <property type="evidence" value="ECO:0000314"/>
    <property type="project" value="UniProtKB"/>
</dbReference>
<dbReference type="CDD" id="cd05259">
    <property type="entry name" value="PCBER_SDR_a"/>
    <property type="match status" value="1"/>
</dbReference>
<dbReference type="Gene3D" id="3.40.50.720">
    <property type="entry name" value="NAD(P)-binding Rossmann-like Domain"/>
    <property type="match status" value="1"/>
</dbReference>
<dbReference type="Gene3D" id="3.90.25.10">
    <property type="entry name" value="UDP-galactose 4-epimerase, domain 1"/>
    <property type="match status" value="1"/>
</dbReference>
<dbReference type="InterPro" id="IPR036291">
    <property type="entry name" value="NAD(P)-bd_dom_sf"/>
</dbReference>
<dbReference type="InterPro" id="IPR008030">
    <property type="entry name" value="NmrA-like"/>
</dbReference>
<dbReference type="InterPro" id="IPR050608">
    <property type="entry name" value="NmrA-type/Isoflavone_red_sf"/>
</dbReference>
<dbReference type="InterPro" id="IPR045312">
    <property type="entry name" value="PCBER-like"/>
</dbReference>
<dbReference type="PANTHER" id="PTHR43349:SF47">
    <property type="entry name" value="NMRA-LIKE DOMAIN-CONTAINING PROTEIN"/>
    <property type="match status" value="1"/>
</dbReference>
<dbReference type="PANTHER" id="PTHR43349">
    <property type="entry name" value="PINORESINOL REDUCTASE-RELATED"/>
    <property type="match status" value="1"/>
</dbReference>
<dbReference type="Pfam" id="PF05368">
    <property type="entry name" value="NmrA"/>
    <property type="match status" value="1"/>
</dbReference>
<dbReference type="SUPFAM" id="SSF51735">
    <property type="entry name" value="NAD(P)-binding Rossmann-fold domains"/>
    <property type="match status" value="1"/>
</dbReference>
<proteinExistence type="evidence at protein level"/>
<evidence type="ECO:0000250" key="1"/>
<evidence type="ECO:0000250" key="2">
    <source>
        <dbReference type="UniProtKB" id="Q9LD14"/>
    </source>
</evidence>
<evidence type="ECO:0000269" key="3">
    <source>
    </source>
</evidence>
<evidence type="ECO:0000269" key="4">
    <source>
    </source>
</evidence>
<evidence type="ECO:0000305" key="5"/>
<gene>
    <name type="primary">PLR_Fi1</name>
</gene>
<name>PILR1_FORIN</name>
<protein>
    <recommendedName>
        <fullName>Bifunctional pinoresinol-lariciresinol reductase</fullName>
        <shortName>PLR-Fi1</shortName>
        <shortName>PLR3</shortName>
    </recommendedName>
    <alternativeName>
        <fullName>(+)-lariciresinol reductase</fullName>
        <ecNumber>1.23.1.2</ecNumber>
    </alternativeName>
    <alternativeName>
        <fullName>(+)-pinoresinol reductase</fullName>
        <ecNumber>1.23.1.1</ecNumber>
    </alternativeName>
</protein>
<feature type="initiator methionine" description="Removed" evidence="4">
    <location>
        <position position="1"/>
    </location>
</feature>
<feature type="chain" id="PRO_0000422927" description="Bifunctional pinoresinol-lariciresinol reductase">
    <location>
        <begin position="2"/>
        <end position="312"/>
    </location>
</feature>
<feature type="active site" description="Proton acceptor" evidence="2">
    <location>
        <position position="139"/>
    </location>
</feature>
<feature type="binding site" evidence="2">
    <location>
        <begin position="10"/>
        <end position="16"/>
    </location>
    <ligand>
        <name>NADP(+)</name>
        <dbReference type="ChEBI" id="CHEBI:58349"/>
    </ligand>
</feature>
<feature type="binding site" evidence="2">
    <location>
        <position position="35"/>
    </location>
    <ligand>
        <name>NADP(+)</name>
        <dbReference type="ChEBI" id="CHEBI:58349"/>
    </ligand>
</feature>
<feature type="binding site" evidence="2">
    <location>
        <position position="44"/>
    </location>
    <ligand>
        <name>NADP(+)</name>
        <dbReference type="ChEBI" id="CHEBI:58349"/>
    </ligand>
</feature>
<feature type="binding site" evidence="2">
    <location>
        <position position="143"/>
    </location>
    <ligand>
        <name>NADP(+)</name>
        <dbReference type="ChEBI" id="CHEBI:58349"/>
    </ligand>
</feature>
<feature type="binding site" evidence="2">
    <location>
        <position position="271"/>
    </location>
    <ligand>
        <name>substrate</name>
    </ligand>
</feature>
<reference key="1">
    <citation type="journal article" date="1996" name="J. Biol. Chem.">
        <title>(+)-Pinoresinol/(+)-lariciresinol reductase from Forsythia intermedia. Protein purification, cDNA cloning, heterologous expression and comparison to isoflavone reductase.</title>
        <authorList>
            <person name="Dinkova-Kostova A.T."/>
            <person name="Gang D.R."/>
            <person name="Davin L.B."/>
            <person name="Bedgar D.L."/>
            <person name="Chu A."/>
            <person name="Lewis N.G."/>
        </authorList>
    </citation>
    <scope>NUCLEOTIDE SEQUENCE [MRNA]</scope>
    <scope>PROTEIN SEQUENCE OF 2-31; 47-53; 113-140; 231-238 AND 301-310</scope>
    <scope>CLEAVAGE OF INITIATOR METHIONINE</scope>
    <scope>FUNCTION</scope>
    <scope>CATALYTIC ACTIVITY</scope>
    <scope>BIOPHYSICOCHEMICAL PROPERTIES</scope>
    <source>
        <tissue>Stem</tissue>
    </source>
</reference>
<reference key="2">
    <citation type="journal article" date="2001" name="Phytochemistry">
        <title>In situ hybridization and immunolocalization of lignan reductases in woody tissues: implications for heartwood formation and other forms of vascular tissue preservation.</title>
        <authorList>
            <person name="Kwon M."/>
            <person name="Davin L.B."/>
            <person name="Lewis N.G."/>
        </authorList>
    </citation>
    <scope>TISSUE SPECIFICITY</scope>
</reference>
<keyword id="KW-0903">Direct protein sequencing</keyword>
<keyword id="KW-0521">NADP</keyword>
<keyword id="KW-0560">Oxidoreductase</keyword>